<protein>
    <recommendedName>
        <fullName>Cysteine-rich venom protein DIS3</fullName>
        <shortName>CRVP</shortName>
    </recommendedName>
    <alternativeName>
        <fullName>Cysteine-rich secretory protein DIS3</fullName>
        <shortName>CRISP-DIS3</shortName>
    </alternativeName>
</protein>
<name>CRVP3_DISTY</name>
<evidence type="ECO:0000250" key="1"/>
<evidence type="ECO:0000255" key="2">
    <source>
        <dbReference type="PROSITE-ProRule" id="PRU01005"/>
    </source>
</evidence>
<evidence type="ECO:0000305" key="3"/>
<comment type="function">
    <text evidence="1">Weakly blocks contraction of smooth muscle elicited by high potassium-induced depolarization, but does not block caffeine-stimulated contraction. May target voltage-gated calcium channels on smooth muscle (By similarity).</text>
</comment>
<comment type="subcellular location">
    <subcellularLocation>
        <location evidence="1">Secreted</location>
    </subcellularLocation>
</comment>
<comment type="tissue specificity">
    <text>Expressed by the venom gland.</text>
</comment>
<comment type="similarity">
    <text evidence="3">Belongs to the CRISP family.</text>
</comment>
<organism>
    <name type="scientific">Dispholidus typus</name>
    <name type="common">Boomslang</name>
    <name type="synonym">Bucephalus typus</name>
    <dbReference type="NCBI Taxonomy" id="46295"/>
    <lineage>
        <taxon>Eukaryota</taxon>
        <taxon>Metazoa</taxon>
        <taxon>Chordata</taxon>
        <taxon>Craniata</taxon>
        <taxon>Vertebrata</taxon>
        <taxon>Euteleostomi</taxon>
        <taxon>Lepidosauria</taxon>
        <taxon>Squamata</taxon>
        <taxon>Bifurcata</taxon>
        <taxon>Unidentata</taxon>
        <taxon>Episquamata</taxon>
        <taxon>Toxicofera</taxon>
        <taxon>Serpentes</taxon>
        <taxon>Colubroidea</taxon>
        <taxon>Colubridae</taxon>
        <taxon>Colubrinae</taxon>
        <taxon>Dispholidus</taxon>
    </lineage>
</organism>
<dbReference type="EMBL" id="DQ139891">
    <property type="protein sequence ID" value="AAZ75597.1"/>
    <property type="molecule type" value="mRNA"/>
</dbReference>
<dbReference type="SMR" id="Q2XXQ4"/>
<dbReference type="GO" id="GO:0005576">
    <property type="term" value="C:extracellular region"/>
    <property type="evidence" value="ECO:0007669"/>
    <property type="project" value="UniProtKB-SubCell"/>
</dbReference>
<dbReference type="GO" id="GO:0005246">
    <property type="term" value="F:calcium channel regulator activity"/>
    <property type="evidence" value="ECO:0007669"/>
    <property type="project" value="UniProtKB-KW"/>
</dbReference>
<dbReference type="GO" id="GO:0090729">
    <property type="term" value="F:toxin activity"/>
    <property type="evidence" value="ECO:0007669"/>
    <property type="project" value="UniProtKB-KW"/>
</dbReference>
<dbReference type="CDD" id="cd05383">
    <property type="entry name" value="CAP_CRISP"/>
    <property type="match status" value="1"/>
</dbReference>
<dbReference type="FunFam" id="1.10.10.740:FF:000001">
    <property type="entry name" value="Cysteine-rich secretory protein 2"/>
    <property type="match status" value="1"/>
</dbReference>
<dbReference type="FunFam" id="3.40.33.10:FF:000005">
    <property type="entry name" value="Cysteine-rich secretory protein 2"/>
    <property type="match status" value="1"/>
</dbReference>
<dbReference type="Gene3D" id="3.40.33.10">
    <property type="entry name" value="CAP"/>
    <property type="match status" value="1"/>
</dbReference>
<dbReference type="Gene3D" id="1.10.10.740">
    <property type="entry name" value="Crisp domain"/>
    <property type="match status" value="1"/>
</dbReference>
<dbReference type="InterPro" id="IPR018244">
    <property type="entry name" value="Allrgn_V5/Tpx1_CS"/>
</dbReference>
<dbReference type="InterPro" id="IPR014044">
    <property type="entry name" value="CAP_dom"/>
</dbReference>
<dbReference type="InterPro" id="IPR035940">
    <property type="entry name" value="CAP_sf"/>
</dbReference>
<dbReference type="InterPro" id="IPR042076">
    <property type="entry name" value="Crisp-like_dom"/>
</dbReference>
<dbReference type="InterPro" id="IPR001283">
    <property type="entry name" value="CRISP-related"/>
</dbReference>
<dbReference type="InterPro" id="IPR013871">
    <property type="entry name" value="Cysteine_rich_secretory"/>
</dbReference>
<dbReference type="InterPro" id="IPR034117">
    <property type="entry name" value="SCP_CRISP"/>
</dbReference>
<dbReference type="InterPro" id="IPR003582">
    <property type="entry name" value="ShKT_dom"/>
</dbReference>
<dbReference type="PANTHER" id="PTHR10334">
    <property type="entry name" value="CYSTEINE-RICH SECRETORY PROTEIN-RELATED"/>
    <property type="match status" value="1"/>
</dbReference>
<dbReference type="Pfam" id="PF00188">
    <property type="entry name" value="CAP"/>
    <property type="match status" value="1"/>
</dbReference>
<dbReference type="Pfam" id="PF08562">
    <property type="entry name" value="Crisp"/>
    <property type="match status" value="1"/>
</dbReference>
<dbReference type="PRINTS" id="PR00837">
    <property type="entry name" value="V5TPXLIKE"/>
</dbReference>
<dbReference type="SMART" id="SM00198">
    <property type="entry name" value="SCP"/>
    <property type="match status" value="1"/>
</dbReference>
<dbReference type="SUPFAM" id="SSF57546">
    <property type="entry name" value="Crisp domain-like"/>
    <property type="match status" value="1"/>
</dbReference>
<dbReference type="SUPFAM" id="SSF55797">
    <property type="entry name" value="PR-1-like"/>
    <property type="match status" value="1"/>
</dbReference>
<dbReference type="PROSITE" id="PS01009">
    <property type="entry name" value="CRISP_1"/>
    <property type="match status" value="1"/>
</dbReference>
<dbReference type="PROSITE" id="PS01010">
    <property type="entry name" value="CRISP_2"/>
    <property type="match status" value="1"/>
</dbReference>
<dbReference type="PROSITE" id="PS51670">
    <property type="entry name" value="SHKT"/>
    <property type="match status" value="1"/>
</dbReference>
<keyword id="KW-0108">Calcium channel impairing toxin</keyword>
<keyword id="KW-1015">Disulfide bond</keyword>
<keyword id="KW-0872">Ion channel impairing toxin</keyword>
<keyword id="KW-0528">Neurotoxin</keyword>
<keyword id="KW-0964">Secreted</keyword>
<keyword id="KW-0732">Signal</keyword>
<keyword id="KW-0800">Toxin</keyword>
<feature type="signal peptide" evidence="1">
    <location>
        <begin position="1"/>
        <end position="18"/>
    </location>
</feature>
<feature type="chain" id="PRO_0000380651" description="Cysteine-rich venom protein DIS3">
    <location>
        <begin position="19"/>
        <end position="237"/>
    </location>
</feature>
<feature type="domain" description="SCP">
    <location>
        <begin position="37"/>
        <end position="165"/>
    </location>
</feature>
<feature type="domain" description="ShKT" evidence="2">
    <location>
        <begin position="201"/>
        <end position="234"/>
    </location>
</feature>
<feature type="disulfide bond" evidence="2">
    <location>
        <begin position="74"/>
        <end position="152"/>
    </location>
</feature>
<feature type="disulfide bond" evidence="2">
    <location>
        <begin position="91"/>
        <end position="166"/>
    </location>
</feature>
<feature type="disulfide bond" evidence="2">
    <location>
        <begin position="147"/>
        <end position="163"/>
    </location>
</feature>
<feature type="disulfide bond" evidence="2">
    <location>
        <begin position="185"/>
        <end position="192"/>
    </location>
</feature>
<feature type="disulfide bond" evidence="2">
    <location>
        <begin position="188"/>
        <end position="197"/>
    </location>
</feature>
<feature type="disulfide bond" evidence="2">
    <location>
        <begin position="201"/>
        <end position="234"/>
    </location>
</feature>
<feature type="disulfide bond" evidence="2">
    <location>
        <begin position="219"/>
        <end position="232"/>
    </location>
</feature>
<sequence length="237" mass="26755">MFVFILLSLAAVLQQSFGNVDFNSESPRIKAKQREIVDKHNAFRRSVRPTASNMLRMEWYSEAASNAERWAYRCVLDHSPETSRILNGIQCGENIYMSSIPRTWIDIIKLWHDEYKNFIYGVGANPPGSIIGHYTQIVWYKSYRIGCAASYCPSSSYDYFYVCQYCPTGNFGGLTATPYKSGPTCGDCPSACDNGLCTNPCSREDVFTNCKSLVAKSNCQDDYIRKNCLATCFCPNK</sequence>
<reference key="1">
    <citation type="journal article" date="2006" name="Nature">
        <title>Early evolution of the venom system in lizards and snakes.</title>
        <authorList>
            <person name="Fry B.G."/>
            <person name="Vidal N."/>
            <person name="Norman J.A."/>
            <person name="Vonk F.J."/>
            <person name="Scheib H."/>
            <person name="Ramjan S.F.R."/>
            <person name="Kuruppu S."/>
            <person name="Fung K."/>
            <person name="Blair Hedges S."/>
            <person name="Richardson M.K."/>
            <person name="Hodgson W.C."/>
            <person name="Ignjatovic V."/>
            <person name="Summerhayes R."/>
            <person name="Kochva E."/>
        </authorList>
    </citation>
    <scope>NUCLEOTIDE SEQUENCE [LARGE SCALE MRNA]</scope>
    <source>
        <tissue>Venom gland</tissue>
    </source>
</reference>
<proteinExistence type="evidence at transcript level"/>
<accession>Q2XXQ4</accession>